<protein>
    <recommendedName>
        <fullName evidence="1">Threonine--tRNA ligase</fullName>
        <ecNumber evidence="1">6.1.1.3</ecNumber>
    </recommendedName>
    <alternativeName>
        <fullName evidence="1">Threonyl-tRNA synthetase</fullName>
        <shortName evidence="1">ThrRS</shortName>
    </alternativeName>
</protein>
<comment type="function">
    <text evidence="1">Catalyzes the attachment of threonine to tRNA(Thr) in a two-step reaction: L-threonine is first activated by ATP to form Thr-AMP and then transferred to the acceptor end of tRNA(Thr). Also edits incorrectly charged L-seryl-tRNA(Thr).</text>
</comment>
<comment type="catalytic activity">
    <reaction evidence="1">
        <text>tRNA(Thr) + L-threonine + ATP = L-threonyl-tRNA(Thr) + AMP + diphosphate + H(+)</text>
        <dbReference type="Rhea" id="RHEA:24624"/>
        <dbReference type="Rhea" id="RHEA-COMP:9670"/>
        <dbReference type="Rhea" id="RHEA-COMP:9704"/>
        <dbReference type="ChEBI" id="CHEBI:15378"/>
        <dbReference type="ChEBI" id="CHEBI:30616"/>
        <dbReference type="ChEBI" id="CHEBI:33019"/>
        <dbReference type="ChEBI" id="CHEBI:57926"/>
        <dbReference type="ChEBI" id="CHEBI:78442"/>
        <dbReference type="ChEBI" id="CHEBI:78534"/>
        <dbReference type="ChEBI" id="CHEBI:456215"/>
        <dbReference type="EC" id="6.1.1.3"/>
    </reaction>
</comment>
<comment type="cofactor">
    <cofactor evidence="1">
        <name>Zn(2+)</name>
        <dbReference type="ChEBI" id="CHEBI:29105"/>
    </cofactor>
    <text evidence="1">Binds 1 zinc ion per subunit.</text>
</comment>
<comment type="subunit">
    <text evidence="1">Homodimer.</text>
</comment>
<comment type="subcellular location">
    <subcellularLocation>
        <location evidence="1">Cytoplasm</location>
    </subcellularLocation>
</comment>
<comment type="similarity">
    <text evidence="1">Belongs to the class-II aminoacyl-tRNA synthetase family.</text>
</comment>
<evidence type="ECO:0000255" key="1">
    <source>
        <dbReference type="HAMAP-Rule" id="MF_00184"/>
    </source>
</evidence>
<evidence type="ECO:0000255" key="2">
    <source>
        <dbReference type="PROSITE-ProRule" id="PRU01228"/>
    </source>
</evidence>
<proteinExistence type="inferred from homology"/>
<name>SYT_ACTPJ</name>
<dbReference type="EC" id="6.1.1.3" evidence="1"/>
<dbReference type="EMBL" id="CP000687">
    <property type="protein sequence ID" value="ABY68824.1"/>
    <property type="molecule type" value="Genomic_DNA"/>
</dbReference>
<dbReference type="RefSeq" id="WP_005606946.1">
    <property type="nucleotide sequence ID" value="NC_010278.1"/>
</dbReference>
<dbReference type="SMR" id="B0BSM2"/>
<dbReference type="KEGG" id="apj:APJL_0220"/>
<dbReference type="HOGENOM" id="CLU_008554_0_1_6"/>
<dbReference type="Proteomes" id="UP000008547">
    <property type="component" value="Chromosome"/>
</dbReference>
<dbReference type="GO" id="GO:0005829">
    <property type="term" value="C:cytosol"/>
    <property type="evidence" value="ECO:0007669"/>
    <property type="project" value="TreeGrafter"/>
</dbReference>
<dbReference type="GO" id="GO:0005524">
    <property type="term" value="F:ATP binding"/>
    <property type="evidence" value="ECO:0007669"/>
    <property type="project" value="UniProtKB-UniRule"/>
</dbReference>
<dbReference type="GO" id="GO:0046872">
    <property type="term" value="F:metal ion binding"/>
    <property type="evidence" value="ECO:0007669"/>
    <property type="project" value="UniProtKB-KW"/>
</dbReference>
<dbReference type="GO" id="GO:0004829">
    <property type="term" value="F:threonine-tRNA ligase activity"/>
    <property type="evidence" value="ECO:0007669"/>
    <property type="project" value="UniProtKB-UniRule"/>
</dbReference>
<dbReference type="GO" id="GO:0000049">
    <property type="term" value="F:tRNA binding"/>
    <property type="evidence" value="ECO:0007669"/>
    <property type="project" value="UniProtKB-KW"/>
</dbReference>
<dbReference type="GO" id="GO:0006435">
    <property type="term" value="P:threonyl-tRNA aminoacylation"/>
    <property type="evidence" value="ECO:0007669"/>
    <property type="project" value="UniProtKB-UniRule"/>
</dbReference>
<dbReference type="CDD" id="cd01667">
    <property type="entry name" value="TGS_ThrRS"/>
    <property type="match status" value="1"/>
</dbReference>
<dbReference type="CDD" id="cd00860">
    <property type="entry name" value="ThrRS_anticodon"/>
    <property type="match status" value="1"/>
</dbReference>
<dbReference type="CDD" id="cd00771">
    <property type="entry name" value="ThrRS_core"/>
    <property type="match status" value="1"/>
</dbReference>
<dbReference type="FunFam" id="3.10.20.30:FF:000005">
    <property type="entry name" value="Threonine--tRNA ligase"/>
    <property type="match status" value="1"/>
</dbReference>
<dbReference type="FunFam" id="3.30.54.20:FF:000002">
    <property type="entry name" value="Threonine--tRNA ligase"/>
    <property type="match status" value="1"/>
</dbReference>
<dbReference type="FunFam" id="3.30.930.10:FF:000002">
    <property type="entry name" value="Threonine--tRNA ligase"/>
    <property type="match status" value="1"/>
</dbReference>
<dbReference type="FunFam" id="3.40.50.800:FF:000001">
    <property type="entry name" value="Threonine--tRNA ligase"/>
    <property type="match status" value="1"/>
</dbReference>
<dbReference type="FunFam" id="3.30.980.10:FF:000005">
    <property type="entry name" value="Threonyl-tRNA synthetase, mitochondrial"/>
    <property type="match status" value="1"/>
</dbReference>
<dbReference type="Gene3D" id="3.10.20.30">
    <property type="match status" value="1"/>
</dbReference>
<dbReference type="Gene3D" id="3.30.54.20">
    <property type="match status" value="1"/>
</dbReference>
<dbReference type="Gene3D" id="3.40.50.800">
    <property type="entry name" value="Anticodon-binding domain"/>
    <property type="match status" value="1"/>
</dbReference>
<dbReference type="Gene3D" id="3.30.930.10">
    <property type="entry name" value="Bira Bifunctional Protein, Domain 2"/>
    <property type="match status" value="1"/>
</dbReference>
<dbReference type="Gene3D" id="3.30.980.10">
    <property type="entry name" value="Threonyl-trna Synthetase, Chain A, domain 2"/>
    <property type="match status" value="1"/>
</dbReference>
<dbReference type="HAMAP" id="MF_00184">
    <property type="entry name" value="Thr_tRNA_synth"/>
    <property type="match status" value="1"/>
</dbReference>
<dbReference type="InterPro" id="IPR002314">
    <property type="entry name" value="aa-tRNA-synt_IIb"/>
</dbReference>
<dbReference type="InterPro" id="IPR006195">
    <property type="entry name" value="aa-tRNA-synth_II"/>
</dbReference>
<dbReference type="InterPro" id="IPR045864">
    <property type="entry name" value="aa-tRNA-synth_II/BPL/LPL"/>
</dbReference>
<dbReference type="InterPro" id="IPR004154">
    <property type="entry name" value="Anticodon-bd"/>
</dbReference>
<dbReference type="InterPro" id="IPR036621">
    <property type="entry name" value="Anticodon-bd_dom_sf"/>
</dbReference>
<dbReference type="InterPro" id="IPR012675">
    <property type="entry name" value="Beta-grasp_dom_sf"/>
</dbReference>
<dbReference type="InterPro" id="IPR004095">
    <property type="entry name" value="TGS"/>
</dbReference>
<dbReference type="InterPro" id="IPR012676">
    <property type="entry name" value="TGS-like"/>
</dbReference>
<dbReference type="InterPro" id="IPR002320">
    <property type="entry name" value="Thr-tRNA-ligase_IIa"/>
</dbReference>
<dbReference type="InterPro" id="IPR018163">
    <property type="entry name" value="Thr/Ala-tRNA-synth_IIc_edit"/>
</dbReference>
<dbReference type="InterPro" id="IPR047246">
    <property type="entry name" value="ThrRS_anticodon"/>
</dbReference>
<dbReference type="InterPro" id="IPR033728">
    <property type="entry name" value="ThrRS_core"/>
</dbReference>
<dbReference type="InterPro" id="IPR012947">
    <property type="entry name" value="tRNA_SAD"/>
</dbReference>
<dbReference type="NCBIfam" id="TIGR00418">
    <property type="entry name" value="thrS"/>
    <property type="match status" value="1"/>
</dbReference>
<dbReference type="PANTHER" id="PTHR11451:SF44">
    <property type="entry name" value="THREONINE--TRNA LIGASE, CHLOROPLASTIC_MITOCHONDRIAL 2"/>
    <property type="match status" value="1"/>
</dbReference>
<dbReference type="PANTHER" id="PTHR11451">
    <property type="entry name" value="THREONINE-TRNA LIGASE"/>
    <property type="match status" value="1"/>
</dbReference>
<dbReference type="Pfam" id="PF03129">
    <property type="entry name" value="HGTP_anticodon"/>
    <property type="match status" value="1"/>
</dbReference>
<dbReference type="Pfam" id="PF02824">
    <property type="entry name" value="TGS"/>
    <property type="match status" value="1"/>
</dbReference>
<dbReference type="Pfam" id="PF00587">
    <property type="entry name" value="tRNA-synt_2b"/>
    <property type="match status" value="1"/>
</dbReference>
<dbReference type="Pfam" id="PF07973">
    <property type="entry name" value="tRNA_SAD"/>
    <property type="match status" value="1"/>
</dbReference>
<dbReference type="PRINTS" id="PR01047">
    <property type="entry name" value="TRNASYNTHTHR"/>
</dbReference>
<dbReference type="SMART" id="SM00863">
    <property type="entry name" value="tRNA_SAD"/>
    <property type="match status" value="1"/>
</dbReference>
<dbReference type="SUPFAM" id="SSF52954">
    <property type="entry name" value="Class II aaRS ABD-related"/>
    <property type="match status" value="1"/>
</dbReference>
<dbReference type="SUPFAM" id="SSF55681">
    <property type="entry name" value="Class II aaRS and biotin synthetases"/>
    <property type="match status" value="1"/>
</dbReference>
<dbReference type="SUPFAM" id="SSF81271">
    <property type="entry name" value="TGS-like"/>
    <property type="match status" value="1"/>
</dbReference>
<dbReference type="SUPFAM" id="SSF55186">
    <property type="entry name" value="ThrRS/AlaRS common domain"/>
    <property type="match status" value="1"/>
</dbReference>
<dbReference type="PROSITE" id="PS50862">
    <property type="entry name" value="AA_TRNA_LIGASE_II"/>
    <property type="match status" value="1"/>
</dbReference>
<dbReference type="PROSITE" id="PS51880">
    <property type="entry name" value="TGS"/>
    <property type="match status" value="1"/>
</dbReference>
<gene>
    <name evidence="1" type="primary">thrS</name>
    <name type="ordered locus">APJL_0220</name>
</gene>
<feature type="chain" id="PRO_1000098538" description="Threonine--tRNA ligase">
    <location>
        <begin position="1"/>
        <end position="643"/>
    </location>
</feature>
<feature type="domain" description="TGS" evidence="2">
    <location>
        <begin position="1"/>
        <end position="61"/>
    </location>
</feature>
<feature type="region of interest" description="Catalytic" evidence="1">
    <location>
        <begin position="243"/>
        <end position="534"/>
    </location>
</feature>
<feature type="binding site" evidence="1">
    <location>
        <position position="334"/>
    </location>
    <ligand>
        <name>Zn(2+)</name>
        <dbReference type="ChEBI" id="CHEBI:29105"/>
    </ligand>
</feature>
<feature type="binding site" evidence="1">
    <location>
        <position position="385"/>
    </location>
    <ligand>
        <name>Zn(2+)</name>
        <dbReference type="ChEBI" id="CHEBI:29105"/>
    </ligand>
</feature>
<feature type="binding site" evidence="1">
    <location>
        <position position="511"/>
    </location>
    <ligand>
        <name>Zn(2+)</name>
        <dbReference type="ChEBI" id="CHEBI:29105"/>
    </ligand>
</feature>
<sequence length="643" mass="73533">MPIITLPDGSQRQFDNPVSVMEVAQSIGAGLAKATIAGRVNGERRDACDIISEDSSLEIITAKDEDGLEIIRHSCAHLLGHAIKQLFPDVKMAIGPTIDNGFYYDVDLDRSLTQEDLDAIEKRMLELAKTNYDVVKKRVSWQEARDTFEKRGEPYKMAILDENIERTATPALYHHEEYIDMCRGPHVPNMRFCHHFKLQKVAGAYWRGDSKNKMLQRIYGTAWADKKQLAEYLTRLEEAAKRDHRRIGKALDLYHMQEEAPGLVFWHNDGWTIFRELETFVRTKLKEYDYQEVKGPFMMDRVLWERTGHWQNYADLMFTTQSENREYAIKPMNCPGHVQIFNQGLKSYRDLPIRMAEFGSCHRNEPSGSLHGLMRVRGFTQDDAHIFCTEDQIESEVTSCIRMVYDIYSTFGFSNIQVKLSTRPENRIGDDAMWDRAEDGLAKALTANGLSYEIQEGEGAFYGPKIEFALRDCLDREWQCGTIQLDFALPGRLDASYVAEDNGRRTPVMIHRAILGSIERFIGIITEEYAGFFPTWLAPTQAVVMNITDSQADYVQKVTKALSDAGIRAKSDLRNEKVGFKVREHTLRRVPYMLVCGDKEIEAGKVSVRTRKGADLGTFTIDEFVEILKNQVKARGLKLLGEE</sequence>
<accession>B0BSM2</accession>
<reference key="1">
    <citation type="journal article" date="2008" name="PLoS ONE">
        <title>Genome biology of Actinobacillus pleuropneumoniae JL03, an isolate of serotype 3 prevalent in China.</title>
        <authorList>
            <person name="Xu Z."/>
            <person name="Zhou Y."/>
            <person name="Li L."/>
            <person name="Zhou R."/>
            <person name="Xiao S."/>
            <person name="Wan Y."/>
            <person name="Zhang S."/>
            <person name="Wang K."/>
            <person name="Li W."/>
            <person name="Li L."/>
            <person name="Jin H."/>
            <person name="Kang M."/>
            <person name="Dalai B."/>
            <person name="Li T."/>
            <person name="Liu L."/>
            <person name="Cheng Y."/>
            <person name="Zhang L."/>
            <person name="Xu T."/>
            <person name="Zheng H."/>
            <person name="Pu S."/>
            <person name="Wang B."/>
            <person name="Gu W."/>
            <person name="Zhang X.L."/>
            <person name="Zhu G.-F."/>
            <person name="Wang S."/>
            <person name="Zhao G.-P."/>
            <person name="Chen H."/>
        </authorList>
    </citation>
    <scope>NUCLEOTIDE SEQUENCE [LARGE SCALE GENOMIC DNA]</scope>
    <source>
        <strain>JL03</strain>
    </source>
</reference>
<organism>
    <name type="scientific">Actinobacillus pleuropneumoniae serotype 3 (strain JL03)</name>
    <dbReference type="NCBI Taxonomy" id="434271"/>
    <lineage>
        <taxon>Bacteria</taxon>
        <taxon>Pseudomonadati</taxon>
        <taxon>Pseudomonadota</taxon>
        <taxon>Gammaproteobacteria</taxon>
        <taxon>Pasteurellales</taxon>
        <taxon>Pasteurellaceae</taxon>
        <taxon>Actinobacillus</taxon>
    </lineage>
</organism>
<keyword id="KW-0030">Aminoacyl-tRNA synthetase</keyword>
<keyword id="KW-0067">ATP-binding</keyword>
<keyword id="KW-0963">Cytoplasm</keyword>
<keyword id="KW-0436">Ligase</keyword>
<keyword id="KW-0479">Metal-binding</keyword>
<keyword id="KW-0547">Nucleotide-binding</keyword>
<keyword id="KW-0648">Protein biosynthesis</keyword>
<keyword id="KW-0694">RNA-binding</keyword>
<keyword id="KW-0820">tRNA-binding</keyword>
<keyword id="KW-0862">Zinc</keyword>